<keyword id="KW-0479">Metal-binding</keyword>
<keyword id="KW-1185">Reference proteome</keyword>
<keyword id="KW-0687">Ribonucleoprotein</keyword>
<keyword id="KW-0689">Ribosomal protein</keyword>
<keyword id="KW-0694">RNA-binding</keyword>
<keyword id="KW-0699">rRNA-binding</keyword>
<keyword id="KW-0862">Zinc</keyword>
<gene>
    <name evidence="1" type="primary">rpmE</name>
    <name type="ordered locus">SACE_6293</name>
</gene>
<evidence type="ECO:0000255" key="1">
    <source>
        <dbReference type="HAMAP-Rule" id="MF_00501"/>
    </source>
</evidence>
<evidence type="ECO:0000305" key="2"/>
<protein>
    <recommendedName>
        <fullName evidence="1">Large ribosomal subunit protein bL31</fullName>
    </recommendedName>
    <alternativeName>
        <fullName evidence="2">50S ribosomal protein L31</fullName>
    </alternativeName>
</protein>
<sequence length="70" mass="7831">MKSGIHPEYVTTQVNCGCGNSFTTRSTRTSGQITVEICSNCHPFYTGKQKILDTGGRVARFEARYGRRKK</sequence>
<organism>
    <name type="scientific">Saccharopolyspora erythraea (strain ATCC 11635 / DSM 40517 / JCM 4748 / NBRC 13426 / NCIMB 8594 / NRRL 2338)</name>
    <dbReference type="NCBI Taxonomy" id="405948"/>
    <lineage>
        <taxon>Bacteria</taxon>
        <taxon>Bacillati</taxon>
        <taxon>Actinomycetota</taxon>
        <taxon>Actinomycetes</taxon>
        <taxon>Pseudonocardiales</taxon>
        <taxon>Pseudonocardiaceae</taxon>
        <taxon>Saccharopolyspora</taxon>
    </lineage>
</organism>
<reference key="1">
    <citation type="journal article" date="2007" name="Nat. Biotechnol.">
        <title>Complete genome sequence of the erythromycin-producing bacterium Saccharopolyspora erythraea NRRL23338.</title>
        <authorList>
            <person name="Oliynyk M."/>
            <person name="Samborskyy M."/>
            <person name="Lester J.B."/>
            <person name="Mironenko T."/>
            <person name="Scott N."/>
            <person name="Dickens S."/>
            <person name="Haydock S.F."/>
            <person name="Leadlay P.F."/>
        </authorList>
    </citation>
    <scope>NUCLEOTIDE SEQUENCE [LARGE SCALE GENOMIC DNA]</scope>
    <source>
        <strain>ATCC 11635 / DSM 40517 / JCM 4748 / NBRC 13426 / NCIMB 8594 / NRRL 2338</strain>
    </source>
</reference>
<comment type="function">
    <text evidence="1">Binds the 23S rRNA.</text>
</comment>
<comment type="cofactor">
    <cofactor evidence="1">
        <name>Zn(2+)</name>
        <dbReference type="ChEBI" id="CHEBI:29105"/>
    </cofactor>
    <text evidence="1">Binds 1 zinc ion per subunit.</text>
</comment>
<comment type="subunit">
    <text evidence="1">Part of the 50S ribosomal subunit.</text>
</comment>
<comment type="similarity">
    <text evidence="1">Belongs to the bacterial ribosomal protein bL31 family. Type A subfamily.</text>
</comment>
<dbReference type="EMBL" id="AM420293">
    <property type="protein sequence ID" value="CAM05465.1"/>
    <property type="molecule type" value="Genomic_DNA"/>
</dbReference>
<dbReference type="RefSeq" id="WP_011875002.1">
    <property type="nucleotide sequence ID" value="NC_009142.1"/>
</dbReference>
<dbReference type="SMR" id="A4FN40"/>
<dbReference type="STRING" id="405948.SACE_6293"/>
<dbReference type="KEGG" id="sen:SACE_6293"/>
<dbReference type="eggNOG" id="COG0254">
    <property type="taxonomic scope" value="Bacteria"/>
</dbReference>
<dbReference type="HOGENOM" id="CLU_114306_4_0_11"/>
<dbReference type="OrthoDB" id="9803251at2"/>
<dbReference type="Proteomes" id="UP000006728">
    <property type="component" value="Chromosome"/>
</dbReference>
<dbReference type="GO" id="GO:1990904">
    <property type="term" value="C:ribonucleoprotein complex"/>
    <property type="evidence" value="ECO:0007669"/>
    <property type="project" value="UniProtKB-KW"/>
</dbReference>
<dbReference type="GO" id="GO:0005840">
    <property type="term" value="C:ribosome"/>
    <property type="evidence" value="ECO:0007669"/>
    <property type="project" value="UniProtKB-KW"/>
</dbReference>
<dbReference type="GO" id="GO:0046872">
    <property type="term" value="F:metal ion binding"/>
    <property type="evidence" value="ECO:0007669"/>
    <property type="project" value="UniProtKB-KW"/>
</dbReference>
<dbReference type="GO" id="GO:0019843">
    <property type="term" value="F:rRNA binding"/>
    <property type="evidence" value="ECO:0007669"/>
    <property type="project" value="UniProtKB-KW"/>
</dbReference>
<dbReference type="GO" id="GO:0003735">
    <property type="term" value="F:structural constituent of ribosome"/>
    <property type="evidence" value="ECO:0007669"/>
    <property type="project" value="InterPro"/>
</dbReference>
<dbReference type="GO" id="GO:0006412">
    <property type="term" value="P:translation"/>
    <property type="evidence" value="ECO:0007669"/>
    <property type="project" value="UniProtKB-UniRule"/>
</dbReference>
<dbReference type="Gene3D" id="4.10.830.30">
    <property type="entry name" value="Ribosomal protein L31"/>
    <property type="match status" value="1"/>
</dbReference>
<dbReference type="HAMAP" id="MF_00501">
    <property type="entry name" value="Ribosomal_bL31_1"/>
    <property type="match status" value="1"/>
</dbReference>
<dbReference type="InterPro" id="IPR034704">
    <property type="entry name" value="Ribosomal_bL28/bL31-like_sf"/>
</dbReference>
<dbReference type="InterPro" id="IPR002150">
    <property type="entry name" value="Ribosomal_bL31"/>
</dbReference>
<dbReference type="InterPro" id="IPR027491">
    <property type="entry name" value="Ribosomal_bL31_A"/>
</dbReference>
<dbReference type="InterPro" id="IPR042105">
    <property type="entry name" value="Ribosomal_bL31_sf"/>
</dbReference>
<dbReference type="NCBIfam" id="TIGR00105">
    <property type="entry name" value="L31"/>
    <property type="match status" value="1"/>
</dbReference>
<dbReference type="NCBIfam" id="NF000612">
    <property type="entry name" value="PRK00019.1"/>
    <property type="match status" value="1"/>
</dbReference>
<dbReference type="NCBIfam" id="NF001809">
    <property type="entry name" value="PRK00528.1"/>
    <property type="match status" value="1"/>
</dbReference>
<dbReference type="PANTHER" id="PTHR33280">
    <property type="entry name" value="50S RIBOSOMAL PROTEIN L31, CHLOROPLASTIC"/>
    <property type="match status" value="1"/>
</dbReference>
<dbReference type="PANTHER" id="PTHR33280:SF1">
    <property type="entry name" value="LARGE RIBOSOMAL SUBUNIT PROTEIN BL31C"/>
    <property type="match status" value="1"/>
</dbReference>
<dbReference type="Pfam" id="PF01197">
    <property type="entry name" value="Ribosomal_L31"/>
    <property type="match status" value="1"/>
</dbReference>
<dbReference type="PRINTS" id="PR01249">
    <property type="entry name" value="RIBOSOMALL31"/>
</dbReference>
<dbReference type="SUPFAM" id="SSF143800">
    <property type="entry name" value="L28p-like"/>
    <property type="match status" value="1"/>
</dbReference>
<dbReference type="PROSITE" id="PS01143">
    <property type="entry name" value="RIBOSOMAL_L31"/>
    <property type="match status" value="1"/>
</dbReference>
<accession>A4FN40</accession>
<proteinExistence type="inferred from homology"/>
<name>RL31_SACEN</name>
<feature type="chain" id="PRO_1000126713" description="Large ribosomal subunit protein bL31">
    <location>
        <begin position="1"/>
        <end position="70"/>
    </location>
</feature>
<feature type="binding site" evidence="1">
    <location>
        <position position="16"/>
    </location>
    <ligand>
        <name>Zn(2+)</name>
        <dbReference type="ChEBI" id="CHEBI:29105"/>
    </ligand>
</feature>
<feature type="binding site" evidence="1">
    <location>
        <position position="18"/>
    </location>
    <ligand>
        <name>Zn(2+)</name>
        <dbReference type="ChEBI" id="CHEBI:29105"/>
    </ligand>
</feature>
<feature type="binding site" evidence="1">
    <location>
        <position position="38"/>
    </location>
    <ligand>
        <name>Zn(2+)</name>
        <dbReference type="ChEBI" id="CHEBI:29105"/>
    </ligand>
</feature>
<feature type="binding site" evidence="1">
    <location>
        <position position="41"/>
    </location>
    <ligand>
        <name>Zn(2+)</name>
        <dbReference type="ChEBI" id="CHEBI:29105"/>
    </ligand>
</feature>